<feature type="chain" id="PRO_1000190734" description="Potassium-transporting ATPase potassium-binding subunit">
    <location>
        <begin position="1"/>
        <end position="583"/>
    </location>
</feature>
<feature type="transmembrane region" description="Helical" evidence="1">
    <location>
        <begin position="3"/>
        <end position="23"/>
    </location>
</feature>
<feature type="transmembrane region" description="Helical" evidence="1">
    <location>
        <begin position="66"/>
        <end position="86"/>
    </location>
</feature>
<feature type="transmembrane region" description="Helical" evidence="1">
    <location>
        <begin position="135"/>
        <end position="155"/>
    </location>
</feature>
<feature type="transmembrane region" description="Helical" evidence="1">
    <location>
        <begin position="177"/>
        <end position="197"/>
    </location>
</feature>
<feature type="transmembrane region" description="Helical" evidence="1">
    <location>
        <begin position="266"/>
        <end position="286"/>
    </location>
</feature>
<feature type="transmembrane region" description="Helical" evidence="1">
    <location>
        <begin position="293"/>
        <end position="313"/>
    </location>
</feature>
<feature type="transmembrane region" description="Helical" evidence="1">
    <location>
        <begin position="402"/>
        <end position="422"/>
    </location>
</feature>
<feature type="transmembrane region" description="Helical" evidence="1">
    <location>
        <begin position="440"/>
        <end position="460"/>
    </location>
</feature>
<feature type="transmembrane region" description="Helical" evidence="1">
    <location>
        <begin position="506"/>
        <end position="526"/>
    </location>
</feature>
<feature type="transmembrane region" description="Helical" evidence="1">
    <location>
        <begin position="549"/>
        <end position="569"/>
    </location>
</feature>
<organism>
    <name type="scientific">Desulfovibrio desulfuricans (strain ATCC 27774 / DSM 6949 / MB)</name>
    <dbReference type="NCBI Taxonomy" id="525146"/>
    <lineage>
        <taxon>Bacteria</taxon>
        <taxon>Pseudomonadati</taxon>
        <taxon>Thermodesulfobacteriota</taxon>
        <taxon>Desulfovibrionia</taxon>
        <taxon>Desulfovibrionales</taxon>
        <taxon>Desulfovibrionaceae</taxon>
        <taxon>Desulfovibrio</taxon>
    </lineage>
</organism>
<sequence>MENIIWQCLLYLSLLTALAWPLGKYIGKVMDGEPFWLQRALAPCERALYRLMGVDPAEQMGWKCYMACVIAFSAVSLVALTALLMAQHLLPLNPRNVSGASWHLALNTAISFVTNTNWQSYAGESTMSYLSQMAGLTVQNFVSAAVGIAVLFALIRGVRASGGIGLGNFWADATRAVLYILLPLSLVMSLLLIEQGVPQNFTDYRAAALLEPLAAEDGAPITHQLVPMGPQASQVSPKQLGTNGGGFNGVNSAHPHENPTPASNMLEMLALLLIPAALCFTFGAKIGDMRQGVAIFAAMFILLTSAVSFTVQAELNATPQIAQGGQVLVAPQSGLQGQAGGNMEGKETRFGIAGSALWASATTAVSNGSVNAMHDSFTPLGGMIPMVLMQLGEVIFGGVGSGLYGMLAFVLLTVFLAGLMVGRTPEYLGKKIEPFEMKMAVVVCLTTPVVILAGGGLMCLAPQIVDSLNNPLPHGFSEILYAATSAGANNGSAFAGLNANTPFLNVLLGVLMLAGRFAPIAAILAMADGLAGKKICPPGAGTLSTCNGLFIFLLIFVILLVGALSFFPALALGPLAEHLQMTR</sequence>
<gene>
    <name evidence="1" type="primary">kdpA</name>
    <name type="ordered locus">Ddes_1677</name>
</gene>
<comment type="function">
    <text evidence="1">Part of the high-affinity ATP-driven potassium transport (or Kdp) system, which catalyzes the hydrolysis of ATP coupled with the electrogenic transport of potassium into the cytoplasm. This subunit binds the periplasmic potassium ions and delivers the ions to the membrane domain of KdpB through an intramembrane tunnel.</text>
</comment>
<comment type="subunit">
    <text evidence="1">The system is composed of three essential subunits: KdpA, KdpB and KdpC.</text>
</comment>
<comment type="subcellular location">
    <subcellularLocation>
        <location evidence="1">Cell inner membrane</location>
        <topology evidence="1">Multi-pass membrane protein</topology>
    </subcellularLocation>
</comment>
<comment type="similarity">
    <text evidence="1">Belongs to the KdpA family.</text>
</comment>
<protein>
    <recommendedName>
        <fullName evidence="1">Potassium-transporting ATPase potassium-binding subunit</fullName>
    </recommendedName>
    <alternativeName>
        <fullName evidence="1">ATP phosphohydrolase [potassium-transporting] A chain</fullName>
    </alternativeName>
    <alternativeName>
        <fullName evidence="1">Potassium-binding and translocating subunit A</fullName>
    </alternativeName>
    <alternativeName>
        <fullName evidence="1">Potassium-translocating ATPase A chain</fullName>
    </alternativeName>
</protein>
<proteinExistence type="inferred from homology"/>
<name>KDPA_DESDA</name>
<evidence type="ECO:0000255" key="1">
    <source>
        <dbReference type="HAMAP-Rule" id="MF_00275"/>
    </source>
</evidence>
<accession>B8J1E9</accession>
<dbReference type="EMBL" id="CP001358">
    <property type="protein sequence ID" value="ACL49576.1"/>
    <property type="molecule type" value="Genomic_DNA"/>
</dbReference>
<dbReference type="SMR" id="B8J1E9"/>
<dbReference type="STRING" id="525146.Ddes_1677"/>
<dbReference type="KEGG" id="dds:Ddes_1677"/>
<dbReference type="eggNOG" id="COG2060">
    <property type="taxonomic scope" value="Bacteria"/>
</dbReference>
<dbReference type="HOGENOM" id="CLU_018614_3_0_7"/>
<dbReference type="GO" id="GO:0005886">
    <property type="term" value="C:plasma membrane"/>
    <property type="evidence" value="ECO:0007669"/>
    <property type="project" value="UniProtKB-SubCell"/>
</dbReference>
<dbReference type="GO" id="GO:0008556">
    <property type="term" value="F:P-type potassium transmembrane transporter activity"/>
    <property type="evidence" value="ECO:0007669"/>
    <property type="project" value="InterPro"/>
</dbReference>
<dbReference type="GO" id="GO:0030955">
    <property type="term" value="F:potassium ion binding"/>
    <property type="evidence" value="ECO:0007669"/>
    <property type="project" value="UniProtKB-UniRule"/>
</dbReference>
<dbReference type="HAMAP" id="MF_00275">
    <property type="entry name" value="KdpA"/>
    <property type="match status" value="1"/>
</dbReference>
<dbReference type="InterPro" id="IPR004623">
    <property type="entry name" value="KdpA"/>
</dbReference>
<dbReference type="NCBIfam" id="TIGR00680">
    <property type="entry name" value="kdpA"/>
    <property type="match status" value="1"/>
</dbReference>
<dbReference type="PANTHER" id="PTHR30607">
    <property type="entry name" value="POTASSIUM-TRANSPORTING ATPASE A CHAIN"/>
    <property type="match status" value="1"/>
</dbReference>
<dbReference type="PANTHER" id="PTHR30607:SF2">
    <property type="entry name" value="POTASSIUM-TRANSPORTING ATPASE POTASSIUM-BINDING SUBUNIT"/>
    <property type="match status" value="1"/>
</dbReference>
<dbReference type="Pfam" id="PF03814">
    <property type="entry name" value="KdpA"/>
    <property type="match status" value="1"/>
</dbReference>
<dbReference type="PIRSF" id="PIRSF001294">
    <property type="entry name" value="K_ATPaseA"/>
    <property type="match status" value="1"/>
</dbReference>
<keyword id="KW-0997">Cell inner membrane</keyword>
<keyword id="KW-1003">Cell membrane</keyword>
<keyword id="KW-0406">Ion transport</keyword>
<keyword id="KW-0472">Membrane</keyword>
<keyword id="KW-0630">Potassium</keyword>
<keyword id="KW-0633">Potassium transport</keyword>
<keyword id="KW-0812">Transmembrane</keyword>
<keyword id="KW-1133">Transmembrane helix</keyword>
<keyword id="KW-0813">Transport</keyword>
<reference key="1">
    <citation type="submission" date="2009-01" db="EMBL/GenBank/DDBJ databases">
        <title>Complete sequence of Desulfovibrio desulfuricans subsp. desulfuricans str. ATCC 27774.</title>
        <authorList>
            <consortium name="US DOE Joint Genome Institute"/>
            <person name="Lucas S."/>
            <person name="Copeland A."/>
            <person name="Lapidus A."/>
            <person name="Glavina del Rio T."/>
            <person name="Tice H."/>
            <person name="Bruce D."/>
            <person name="Goodwin L."/>
            <person name="Pitluck S."/>
            <person name="Sims D."/>
            <person name="Lu M."/>
            <person name="Kiss H."/>
            <person name="Meineke L."/>
            <person name="Brettin T."/>
            <person name="Detter J.C."/>
            <person name="Han C."/>
            <person name="Larimer F."/>
            <person name="Land M."/>
            <person name="Hauser L."/>
            <person name="Kyrpides N."/>
            <person name="Ovchinnikova G."/>
            <person name="Hazen T.C."/>
        </authorList>
    </citation>
    <scope>NUCLEOTIDE SEQUENCE [LARGE SCALE GENOMIC DNA]</scope>
    <source>
        <strain>ATCC 27774 / DSM 6949 / MB</strain>
    </source>
</reference>